<sequence>MAKKGKKIVAAQQKVDADRKYDISEGIDTALQARFAGFDESVDIAVRLGVDPRHADQMVRGSVVLPHGTGKEIKILVFAKGEKEKEALDAGADFVGNDELIEDIKNGWFGFDKAVATPDMMGAVGKIGKLLGPRGLMPNAKTGTVTFDVARAVNDLKAGKIDFRVDKAGIVHAPLGKASFGTEKLQDNMLALLRMLVAMKPATSKGAYMRSLAVSTSMGAGVRLDPLLVKDAVK</sequence>
<evidence type="ECO:0000255" key="1">
    <source>
        <dbReference type="HAMAP-Rule" id="MF_01318"/>
    </source>
</evidence>
<evidence type="ECO:0000305" key="2"/>
<proteinExistence type="inferred from homology"/>
<name>RL1_DESOH</name>
<keyword id="KW-1185">Reference proteome</keyword>
<keyword id="KW-0678">Repressor</keyword>
<keyword id="KW-0687">Ribonucleoprotein</keyword>
<keyword id="KW-0689">Ribosomal protein</keyword>
<keyword id="KW-0694">RNA-binding</keyword>
<keyword id="KW-0699">rRNA-binding</keyword>
<keyword id="KW-0810">Translation regulation</keyword>
<keyword id="KW-0820">tRNA-binding</keyword>
<dbReference type="EMBL" id="CP000859">
    <property type="protein sequence ID" value="ABW66509.1"/>
    <property type="molecule type" value="Genomic_DNA"/>
</dbReference>
<dbReference type="RefSeq" id="WP_012174128.1">
    <property type="nucleotide sequence ID" value="NC_009943.1"/>
</dbReference>
<dbReference type="SMR" id="A8ZUU6"/>
<dbReference type="STRING" id="96561.Dole_0699"/>
<dbReference type="KEGG" id="dol:Dole_0699"/>
<dbReference type="eggNOG" id="COG0081">
    <property type="taxonomic scope" value="Bacteria"/>
</dbReference>
<dbReference type="HOGENOM" id="CLU_062853_0_0_7"/>
<dbReference type="OrthoDB" id="9803740at2"/>
<dbReference type="Proteomes" id="UP000008561">
    <property type="component" value="Chromosome"/>
</dbReference>
<dbReference type="GO" id="GO:0022625">
    <property type="term" value="C:cytosolic large ribosomal subunit"/>
    <property type="evidence" value="ECO:0007669"/>
    <property type="project" value="TreeGrafter"/>
</dbReference>
<dbReference type="GO" id="GO:0019843">
    <property type="term" value="F:rRNA binding"/>
    <property type="evidence" value="ECO:0007669"/>
    <property type="project" value="UniProtKB-UniRule"/>
</dbReference>
<dbReference type="GO" id="GO:0003735">
    <property type="term" value="F:structural constituent of ribosome"/>
    <property type="evidence" value="ECO:0007669"/>
    <property type="project" value="InterPro"/>
</dbReference>
<dbReference type="GO" id="GO:0000049">
    <property type="term" value="F:tRNA binding"/>
    <property type="evidence" value="ECO:0007669"/>
    <property type="project" value="UniProtKB-KW"/>
</dbReference>
<dbReference type="GO" id="GO:0006417">
    <property type="term" value="P:regulation of translation"/>
    <property type="evidence" value="ECO:0007669"/>
    <property type="project" value="UniProtKB-KW"/>
</dbReference>
<dbReference type="GO" id="GO:0006412">
    <property type="term" value="P:translation"/>
    <property type="evidence" value="ECO:0007669"/>
    <property type="project" value="UniProtKB-UniRule"/>
</dbReference>
<dbReference type="CDD" id="cd00403">
    <property type="entry name" value="Ribosomal_L1"/>
    <property type="match status" value="1"/>
</dbReference>
<dbReference type="FunFam" id="3.40.50.790:FF:000001">
    <property type="entry name" value="50S ribosomal protein L1"/>
    <property type="match status" value="1"/>
</dbReference>
<dbReference type="Gene3D" id="3.30.190.20">
    <property type="match status" value="1"/>
</dbReference>
<dbReference type="Gene3D" id="3.40.50.790">
    <property type="match status" value="1"/>
</dbReference>
<dbReference type="HAMAP" id="MF_01318_B">
    <property type="entry name" value="Ribosomal_uL1_B"/>
    <property type="match status" value="1"/>
</dbReference>
<dbReference type="InterPro" id="IPR005878">
    <property type="entry name" value="Ribosom_uL1_bac-type"/>
</dbReference>
<dbReference type="InterPro" id="IPR002143">
    <property type="entry name" value="Ribosomal_uL1"/>
</dbReference>
<dbReference type="InterPro" id="IPR023674">
    <property type="entry name" value="Ribosomal_uL1-like"/>
</dbReference>
<dbReference type="InterPro" id="IPR028364">
    <property type="entry name" value="Ribosomal_uL1/biogenesis"/>
</dbReference>
<dbReference type="InterPro" id="IPR016095">
    <property type="entry name" value="Ribosomal_uL1_3-a/b-sand"/>
</dbReference>
<dbReference type="InterPro" id="IPR023673">
    <property type="entry name" value="Ribosomal_uL1_CS"/>
</dbReference>
<dbReference type="NCBIfam" id="TIGR01169">
    <property type="entry name" value="rplA_bact"/>
    <property type="match status" value="1"/>
</dbReference>
<dbReference type="PANTHER" id="PTHR36427">
    <property type="entry name" value="54S RIBOSOMAL PROTEIN L1, MITOCHONDRIAL"/>
    <property type="match status" value="1"/>
</dbReference>
<dbReference type="PANTHER" id="PTHR36427:SF3">
    <property type="entry name" value="LARGE RIBOSOMAL SUBUNIT PROTEIN UL1M"/>
    <property type="match status" value="1"/>
</dbReference>
<dbReference type="Pfam" id="PF00687">
    <property type="entry name" value="Ribosomal_L1"/>
    <property type="match status" value="1"/>
</dbReference>
<dbReference type="PIRSF" id="PIRSF002155">
    <property type="entry name" value="Ribosomal_L1"/>
    <property type="match status" value="1"/>
</dbReference>
<dbReference type="SUPFAM" id="SSF56808">
    <property type="entry name" value="Ribosomal protein L1"/>
    <property type="match status" value="1"/>
</dbReference>
<dbReference type="PROSITE" id="PS01199">
    <property type="entry name" value="RIBOSOMAL_L1"/>
    <property type="match status" value="1"/>
</dbReference>
<accession>A8ZUU6</accession>
<feature type="chain" id="PRO_1000141392" description="Large ribosomal subunit protein uL1">
    <location>
        <begin position="1"/>
        <end position="234"/>
    </location>
</feature>
<gene>
    <name evidence="1" type="primary">rplA</name>
    <name type="ordered locus">Dole_0699</name>
</gene>
<protein>
    <recommendedName>
        <fullName evidence="1">Large ribosomal subunit protein uL1</fullName>
    </recommendedName>
    <alternativeName>
        <fullName evidence="2">50S ribosomal protein L1</fullName>
    </alternativeName>
</protein>
<reference key="1">
    <citation type="submission" date="2007-10" db="EMBL/GenBank/DDBJ databases">
        <title>Complete sequence of Desulfococcus oleovorans Hxd3.</title>
        <authorList>
            <consortium name="US DOE Joint Genome Institute"/>
            <person name="Copeland A."/>
            <person name="Lucas S."/>
            <person name="Lapidus A."/>
            <person name="Barry K."/>
            <person name="Glavina del Rio T."/>
            <person name="Dalin E."/>
            <person name="Tice H."/>
            <person name="Pitluck S."/>
            <person name="Kiss H."/>
            <person name="Brettin T."/>
            <person name="Bruce D."/>
            <person name="Detter J.C."/>
            <person name="Han C."/>
            <person name="Schmutz J."/>
            <person name="Larimer F."/>
            <person name="Land M."/>
            <person name="Hauser L."/>
            <person name="Kyrpides N."/>
            <person name="Kim E."/>
            <person name="Wawrik B."/>
            <person name="Richardson P."/>
        </authorList>
    </citation>
    <scope>NUCLEOTIDE SEQUENCE [LARGE SCALE GENOMIC DNA]</scope>
    <source>
        <strain>DSM 6200 / JCM 39069 / Hxd3</strain>
    </source>
</reference>
<comment type="function">
    <text evidence="1">Binds directly to 23S rRNA. The L1 stalk is quite mobile in the ribosome, and is involved in E site tRNA release.</text>
</comment>
<comment type="function">
    <text evidence="1">Protein L1 is also a translational repressor protein, it controls the translation of the L11 operon by binding to its mRNA.</text>
</comment>
<comment type="subunit">
    <text evidence="1">Part of the 50S ribosomal subunit.</text>
</comment>
<comment type="similarity">
    <text evidence="1">Belongs to the universal ribosomal protein uL1 family.</text>
</comment>
<organism>
    <name type="scientific">Desulfosudis oleivorans (strain DSM 6200 / JCM 39069 / Hxd3)</name>
    <name type="common">Desulfococcus oleovorans</name>
    <dbReference type="NCBI Taxonomy" id="96561"/>
    <lineage>
        <taxon>Bacteria</taxon>
        <taxon>Pseudomonadati</taxon>
        <taxon>Thermodesulfobacteriota</taxon>
        <taxon>Desulfobacteria</taxon>
        <taxon>Desulfobacterales</taxon>
        <taxon>Desulfosudaceae</taxon>
        <taxon>Desulfosudis</taxon>
    </lineage>
</organism>